<protein>
    <recommendedName>
        <fullName evidence="1">Transcription factor FapR</fullName>
    </recommendedName>
    <alternativeName>
        <fullName evidence="1">Fatty acid and phospholipid biosynthesis regulator</fullName>
    </alternativeName>
</protein>
<organism>
    <name type="scientific">Listeria welshimeri serovar 6b (strain ATCC 35897 / DSM 20650 / CCUG 15529 / CIP 8149 / NCTC 11857 / SLCC 5334 / V8)</name>
    <dbReference type="NCBI Taxonomy" id="386043"/>
    <lineage>
        <taxon>Bacteria</taxon>
        <taxon>Bacillati</taxon>
        <taxon>Bacillota</taxon>
        <taxon>Bacilli</taxon>
        <taxon>Bacillales</taxon>
        <taxon>Listeriaceae</taxon>
        <taxon>Listeria</taxon>
    </lineage>
</organism>
<evidence type="ECO:0000255" key="1">
    <source>
        <dbReference type="HAMAP-Rule" id="MF_01814"/>
    </source>
</evidence>
<accession>A0AJR5</accession>
<proteinExistence type="inferred from homology"/>
<gene>
    <name evidence="1" type="primary">fapR</name>
    <name type="ordered locus">lwe1829</name>
</gene>
<comment type="function">
    <text evidence="1">Transcriptional factor involved in regulation of membrane lipid biosynthesis by repressing genes involved in fatty acid and phospholipid metabolism.</text>
</comment>
<comment type="similarity">
    <text evidence="1">Belongs to the FapR family.</text>
</comment>
<sequence>MKKYSKKDRQMKLQVAIEENPFITDEQLAEKFGVSVQTIRLDRVALSIPELRERIKHVASVNYADAVKSLPIDEVIGEIIDIQLSKSAISIFDVRSEHVFKRNKIARGHHLFAQANSLATAVIPNELALTTQATVRFVRSVNEGERIIAKAKVRPATDNRAITIVDVKSYVGDELVLKGKFEMYHATQK</sequence>
<dbReference type="EMBL" id="AM263198">
    <property type="protein sequence ID" value="CAK21247.1"/>
    <property type="molecule type" value="Genomic_DNA"/>
</dbReference>
<dbReference type="RefSeq" id="WP_011702601.1">
    <property type="nucleotide sequence ID" value="NC_008555.1"/>
</dbReference>
<dbReference type="SMR" id="A0AJR5"/>
<dbReference type="STRING" id="386043.lwe1829"/>
<dbReference type="GeneID" id="61189730"/>
<dbReference type="KEGG" id="lwe:lwe1829"/>
<dbReference type="eggNOG" id="COG2050">
    <property type="taxonomic scope" value="Bacteria"/>
</dbReference>
<dbReference type="HOGENOM" id="CLU_095708_0_0_9"/>
<dbReference type="OrthoDB" id="1706183at2"/>
<dbReference type="Proteomes" id="UP000000779">
    <property type="component" value="Chromosome"/>
</dbReference>
<dbReference type="GO" id="GO:0003677">
    <property type="term" value="F:DNA binding"/>
    <property type="evidence" value="ECO:0007669"/>
    <property type="project" value="UniProtKB-KW"/>
</dbReference>
<dbReference type="GO" id="GO:0003700">
    <property type="term" value="F:DNA-binding transcription factor activity"/>
    <property type="evidence" value="ECO:0007669"/>
    <property type="project" value="UniProtKB-UniRule"/>
</dbReference>
<dbReference type="GO" id="GO:0006633">
    <property type="term" value="P:fatty acid biosynthetic process"/>
    <property type="evidence" value="ECO:0007669"/>
    <property type="project" value="UniProtKB-KW"/>
</dbReference>
<dbReference type="GO" id="GO:0045892">
    <property type="term" value="P:negative regulation of DNA-templated transcription"/>
    <property type="evidence" value="ECO:0007669"/>
    <property type="project" value="UniProtKB-UniRule"/>
</dbReference>
<dbReference type="GO" id="GO:0045717">
    <property type="term" value="P:negative regulation of fatty acid biosynthetic process"/>
    <property type="evidence" value="ECO:0007669"/>
    <property type="project" value="UniProtKB-UniRule"/>
</dbReference>
<dbReference type="CDD" id="cd03440">
    <property type="entry name" value="hot_dog"/>
    <property type="match status" value="1"/>
</dbReference>
<dbReference type="Gene3D" id="3.10.129.10">
    <property type="entry name" value="Hotdog Thioesterase"/>
    <property type="match status" value="1"/>
</dbReference>
<dbReference type="Gene3D" id="1.10.10.10">
    <property type="entry name" value="Winged helix-like DNA-binding domain superfamily/Winged helix DNA-binding domain"/>
    <property type="match status" value="1"/>
</dbReference>
<dbReference type="HAMAP" id="MF_01814">
    <property type="entry name" value="Transcrip_fact_FapR"/>
    <property type="match status" value="1"/>
</dbReference>
<dbReference type="InterPro" id="IPR029069">
    <property type="entry name" value="HotDog_dom_sf"/>
</dbReference>
<dbReference type="InterPro" id="IPR017275">
    <property type="entry name" value="Transcription_factor_FapR"/>
</dbReference>
<dbReference type="InterPro" id="IPR036388">
    <property type="entry name" value="WH-like_DNA-bd_sf"/>
</dbReference>
<dbReference type="NCBIfam" id="NF003359">
    <property type="entry name" value="PRK04424.1"/>
    <property type="match status" value="1"/>
</dbReference>
<dbReference type="PIRSF" id="PIRSF037733">
    <property type="entry name" value="Transcription_factor_FapR"/>
    <property type="match status" value="1"/>
</dbReference>
<dbReference type="SUPFAM" id="SSF54637">
    <property type="entry name" value="Thioesterase/thiol ester dehydrase-isomerase"/>
    <property type="match status" value="1"/>
</dbReference>
<feature type="chain" id="PRO_1000070207" description="Transcription factor FapR">
    <location>
        <begin position="1"/>
        <end position="189"/>
    </location>
</feature>
<name>FAPR_LISW6</name>
<keyword id="KW-0238">DNA-binding</keyword>
<keyword id="KW-0275">Fatty acid biosynthesis</keyword>
<keyword id="KW-0276">Fatty acid metabolism</keyword>
<keyword id="KW-0444">Lipid biosynthesis</keyword>
<keyword id="KW-0443">Lipid metabolism</keyword>
<keyword id="KW-0678">Repressor</keyword>
<keyword id="KW-0804">Transcription</keyword>
<keyword id="KW-0805">Transcription regulation</keyword>
<reference key="1">
    <citation type="journal article" date="2006" name="J. Bacteriol.">
        <title>Whole-genome sequence of Listeria welshimeri reveals common steps in genome reduction with Listeria innocua as compared to Listeria monocytogenes.</title>
        <authorList>
            <person name="Hain T."/>
            <person name="Steinweg C."/>
            <person name="Kuenne C.T."/>
            <person name="Billion A."/>
            <person name="Ghai R."/>
            <person name="Chatterjee S.S."/>
            <person name="Domann E."/>
            <person name="Kaerst U."/>
            <person name="Goesmann A."/>
            <person name="Bekel T."/>
            <person name="Bartels D."/>
            <person name="Kaiser O."/>
            <person name="Meyer F."/>
            <person name="Puehler A."/>
            <person name="Weisshaar B."/>
            <person name="Wehland J."/>
            <person name="Liang C."/>
            <person name="Dandekar T."/>
            <person name="Lampidis R."/>
            <person name="Kreft J."/>
            <person name="Goebel W."/>
            <person name="Chakraborty T."/>
        </authorList>
    </citation>
    <scope>NUCLEOTIDE SEQUENCE [LARGE SCALE GENOMIC DNA]</scope>
    <source>
        <strain>ATCC 35897 / DSM 20650 / CCUG 15529 / CIP 8149 / NCTC 11857 / SLCC 5334 / V8</strain>
    </source>
</reference>